<accession>P01950</accession>
<proteinExistence type="evidence at protein level"/>
<gene>
    <name type="primary">HBA</name>
</gene>
<feature type="chain" id="PRO_0000052772" description="Hemoglobin subunit alpha">
    <location>
        <begin position="1"/>
        <end position="141"/>
    </location>
</feature>
<feature type="peptide" id="PRO_0000455948" description="Hemopressin" evidence="2">
    <location>
        <begin position="95"/>
        <end position="103"/>
    </location>
</feature>
<feature type="domain" description="Globin" evidence="4">
    <location>
        <begin position="1"/>
        <end position="141"/>
    </location>
</feature>
<feature type="binding site" evidence="4">
    <location>
        <position position="58"/>
    </location>
    <ligand>
        <name>O2</name>
        <dbReference type="ChEBI" id="CHEBI:15379"/>
    </ligand>
</feature>
<feature type="binding site" description="proximal binding residue" evidence="4">
    <location>
        <position position="87"/>
    </location>
    <ligand>
        <name>heme b</name>
        <dbReference type="ChEBI" id="CHEBI:60344"/>
    </ligand>
    <ligandPart>
        <name>Fe</name>
        <dbReference type="ChEBI" id="CHEBI:18248"/>
    </ligandPart>
</feature>
<feature type="modified residue" description="Phosphoserine" evidence="3">
    <location>
        <position position="3"/>
    </location>
</feature>
<feature type="modified residue" description="N6-succinyllysine" evidence="1">
    <location>
        <position position="7"/>
    </location>
</feature>
<feature type="modified residue" description="N6-succinyllysine" evidence="1">
    <location>
        <position position="11"/>
    </location>
</feature>
<feature type="modified residue" description="N6-acetyllysine; alternate" evidence="3">
    <location>
        <position position="16"/>
    </location>
</feature>
<feature type="modified residue" description="N6-succinyllysine; alternate" evidence="1">
    <location>
        <position position="16"/>
    </location>
</feature>
<feature type="modified residue" description="Phosphotyrosine" evidence="3">
    <location>
        <position position="24"/>
    </location>
</feature>
<feature type="modified residue" description="Phosphoserine" evidence="3">
    <location>
        <position position="35"/>
    </location>
</feature>
<feature type="modified residue" description="N6-succinyllysine" evidence="1">
    <location>
        <position position="40"/>
    </location>
</feature>
<feature type="modified residue" description="Phosphoserine" evidence="3">
    <location>
        <position position="49"/>
    </location>
</feature>
<feature type="modified residue" description="Phosphoserine" evidence="1">
    <location>
        <position position="102"/>
    </location>
</feature>
<feature type="modified residue" description="Phosphothreonine" evidence="1">
    <location>
        <position position="108"/>
    </location>
</feature>
<feature type="modified residue" description="Phosphoserine" evidence="1">
    <location>
        <position position="124"/>
    </location>
</feature>
<feature type="modified residue" description="Phosphoserine" evidence="1">
    <location>
        <position position="131"/>
    </location>
</feature>
<feature type="modified residue" description="Phosphothreonine" evidence="1">
    <location>
        <position position="134"/>
    </location>
</feature>
<feature type="modified residue" description="Phosphothreonine" evidence="1">
    <location>
        <position position="137"/>
    </location>
</feature>
<feature type="modified residue" description="Phosphoserine" evidence="1">
    <location>
        <position position="138"/>
    </location>
</feature>
<keyword id="KW-0007">Acetylation</keyword>
<keyword id="KW-0903">Direct protein sequencing</keyword>
<keyword id="KW-0349">Heme</keyword>
<keyword id="KW-0408">Iron</keyword>
<keyword id="KW-0479">Metal-binding</keyword>
<keyword id="KW-0561">Oxygen transport</keyword>
<keyword id="KW-0597">Phosphoprotein</keyword>
<keyword id="KW-0813">Transport</keyword>
<dbReference type="PIR" id="A02272">
    <property type="entry name" value="HATSM"/>
</dbReference>
<dbReference type="SMR" id="P01950"/>
<dbReference type="GO" id="GO:0072562">
    <property type="term" value="C:blood microparticle"/>
    <property type="evidence" value="ECO:0007669"/>
    <property type="project" value="TreeGrafter"/>
</dbReference>
<dbReference type="GO" id="GO:0031838">
    <property type="term" value="C:haptoglobin-hemoglobin complex"/>
    <property type="evidence" value="ECO:0007669"/>
    <property type="project" value="TreeGrafter"/>
</dbReference>
<dbReference type="GO" id="GO:0005833">
    <property type="term" value="C:hemoglobin complex"/>
    <property type="evidence" value="ECO:0007669"/>
    <property type="project" value="InterPro"/>
</dbReference>
<dbReference type="GO" id="GO:0031720">
    <property type="term" value="F:haptoglobin binding"/>
    <property type="evidence" value="ECO:0007669"/>
    <property type="project" value="TreeGrafter"/>
</dbReference>
<dbReference type="GO" id="GO:0020037">
    <property type="term" value="F:heme binding"/>
    <property type="evidence" value="ECO:0007669"/>
    <property type="project" value="InterPro"/>
</dbReference>
<dbReference type="GO" id="GO:0005506">
    <property type="term" value="F:iron ion binding"/>
    <property type="evidence" value="ECO:0007669"/>
    <property type="project" value="InterPro"/>
</dbReference>
<dbReference type="GO" id="GO:0043177">
    <property type="term" value="F:organic acid binding"/>
    <property type="evidence" value="ECO:0007669"/>
    <property type="project" value="TreeGrafter"/>
</dbReference>
<dbReference type="GO" id="GO:0019825">
    <property type="term" value="F:oxygen binding"/>
    <property type="evidence" value="ECO:0007669"/>
    <property type="project" value="InterPro"/>
</dbReference>
<dbReference type="GO" id="GO:0005344">
    <property type="term" value="F:oxygen carrier activity"/>
    <property type="evidence" value="ECO:0007669"/>
    <property type="project" value="UniProtKB-KW"/>
</dbReference>
<dbReference type="GO" id="GO:0004601">
    <property type="term" value="F:peroxidase activity"/>
    <property type="evidence" value="ECO:0007669"/>
    <property type="project" value="TreeGrafter"/>
</dbReference>
<dbReference type="GO" id="GO:0042744">
    <property type="term" value="P:hydrogen peroxide catabolic process"/>
    <property type="evidence" value="ECO:0007669"/>
    <property type="project" value="TreeGrafter"/>
</dbReference>
<dbReference type="CDD" id="cd08927">
    <property type="entry name" value="Hb-alpha-like"/>
    <property type="match status" value="1"/>
</dbReference>
<dbReference type="FunFam" id="1.10.490.10:FF:000002">
    <property type="entry name" value="Hemoglobin subunit alpha"/>
    <property type="match status" value="1"/>
</dbReference>
<dbReference type="Gene3D" id="1.10.490.10">
    <property type="entry name" value="Globins"/>
    <property type="match status" value="1"/>
</dbReference>
<dbReference type="InterPro" id="IPR000971">
    <property type="entry name" value="Globin"/>
</dbReference>
<dbReference type="InterPro" id="IPR009050">
    <property type="entry name" value="Globin-like_sf"/>
</dbReference>
<dbReference type="InterPro" id="IPR012292">
    <property type="entry name" value="Globin/Proto"/>
</dbReference>
<dbReference type="InterPro" id="IPR002338">
    <property type="entry name" value="Hemoglobin_a-typ"/>
</dbReference>
<dbReference type="InterPro" id="IPR050056">
    <property type="entry name" value="Hemoglobin_oxygen_transport"/>
</dbReference>
<dbReference type="InterPro" id="IPR002339">
    <property type="entry name" value="Hemoglobin_pi"/>
</dbReference>
<dbReference type="PANTHER" id="PTHR11442">
    <property type="entry name" value="HEMOGLOBIN FAMILY MEMBER"/>
    <property type="match status" value="1"/>
</dbReference>
<dbReference type="PANTHER" id="PTHR11442:SF48">
    <property type="entry name" value="HEMOGLOBIN SUBUNIT ALPHA"/>
    <property type="match status" value="1"/>
</dbReference>
<dbReference type="Pfam" id="PF00042">
    <property type="entry name" value="Globin"/>
    <property type="match status" value="1"/>
</dbReference>
<dbReference type="PRINTS" id="PR00612">
    <property type="entry name" value="ALPHAHAEM"/>
</dbReference>
<dbReference type="PRINTS" id="PR00815">
    <property type="entry name" value="PIHAEM"/>
</dbReference>
<dbReference type="SUPFAM" id="SSF46458">
    <property type="entry name" value="Globin-like"/>
    <property type="match status" value="1"/>
</dbReference>
<dbReference type="PROSITE" id="PS01033">
    <property type="entry name" value="GLOBIN"/>
    <property type="match status" value="1"/>
</dbReference>
<reference key="1">
    <citation type="journal article" date="1981" name="Hoppe-Seyler's Z. Physiol. Chem.">
        <title>The primary structure of adult hemoglobin of musk shrew (Suncus murinus).</title>
        <authorList>
            <person name="Maita T."/>
            <person name="Matsuda G."/>
            <person name="Takenaka O."/>
            <person name="Takahashi K."/>
        </authorList>
    </citation>
    <scope>PROTEIN SEQUENCE</scope>
</reference>
<sequence length="141" mass="14982">VLSANDKANVKAAWDKVGGQAANYGAEALERTFASFPTTKTYFPHYDLSPGSAQVKAHGKKVADALTKAVGSMDDLPGALSALSDLHAHKLRVDPVNFKLLSHCLLVTLAAHHPADFTPAVHASLDKFLASVSTVLTSKYR</sequence>
<comment type="function">
    <text>Involved in oxygen transport from the lung to the various peripheral tissues.</text>
</comment>
<comment type="function">
    <molecule>Hemopressin</molecule>
    <text evidence="2">Hemopressin acts as an antagonist peptide of the cannabinoid receptor CNR1. Hemopressin-binding efficiently blocks cannabinoid receptor CNR1 and subsequent signaling.</text>
</comment>
<comment type="subunit">
    <text>Heterotetramer of two alpha chains and two beta chains.</text>
</comment>
<comment type="tissue specificity">
    <text>Red blood cells.</text>
</comment>
<comment type="similarity">
    <text evidence="4">Belongs to the globin family.</text>
</comment>
<evidence type="ECO:0000250" key="1">
    <source>
        <dbReference type="UniProtKB" id="P01942"/>
    </source>
</evidence>
<evidence type="ECO:0000250" key="2">
    <source>
        <dbReference type="UniProtKB" id="P01946"/>
    </source>
</evidence>
<evidence type="ECO:0000250" key="3">
    <source>
        <dbReference type="UniProtKB" id="P69905"/>
    </source>
</evidence>
<evidence type="ECO:0000255" key="4">
    <source>
        <dbReference type="PROSITE-ProRule" id="PRU00238"/>
    </source>
</evidence>
<organism>
    <name type="scientific">Suncus murinus</name>
    <name type="common">Asian house shrew</name>
    <name type="synonym">Musk shrew</name>
    <dbReference type="NCBI Taxonomy" id="9378"/>
    <lineage>
        <taxon>Eukaryota</taxon>
        <taxon>Metazoa</taxon>
        <taxon>Chordata</taxon>
        <taxon>Craniata</taxon>
        <taxon>Vertebrata</taxon>
        <taxon>Euteleostomi</taxon>
        <taxon>Mammalia</taxon>
        <taxon>Eutheria</taxon>
        <taxon>Laurasiatheria</taxon>
        <taxon>Eulipotyphla</taxon>
        <taxon>Soricidae</taxon>
        <taxon>Crocidurinae</taxon>
        <taxon>Suncus</taxon>
    </lineage>
</organism>
<protein>
    <recommendedName>
        <fullName>Hemoglobin subunit alpha</fullName>
    </recommendedName>
    <alternativeName>
        <fullName>Alpha-globin</fullName>
    </alternativeName>
    <alternativeName>
        <fullName>Hemoglobin alpha chain</fullName>
    </alternativeName>
    <component>
        <recommendedName>
            <fullName evidence="2">Hemopressin</fullName>
        </recommendedName>
    </component>
</protein>
<name>HBA_SUNMU</name>